<sequence length="244" mass="27769">MVHITRFEAPWFLKVGKKEYKWIIRSRAGPHKIQESVPLAILLKYYLKAVDTTREAKRIIFDGKVLVDGKVRRDYKYPVGLMDVVEIPSADLRVRIIPDNVRYLTTINISREDAKYKFVRIMNKTTLKSGVLQLNLEDGRNILLKGEELSQYNLPTLTTLKIELPEQKITTAYTIKEGVYAMIIGGRNAGLHGKISKIQLAKYKRIKYSLVTLEGKDGSTFQTNLINVMAIGENEADSNLGVKL</sequence>
<reference key="1">
    <citation type="journal article" date="1999" name="Mol. Phylogenet. Evol.">
        <title>The structure and evolution of the ribosomal proteins encoded in the spc operon of the archaeon (Crenarchaeota) Sulfolobus acidocaldarius.</title>
        <authorList>
            <person name="Yang D."/>
            <person name="Kusser I."/>
            <person name="Koepke A.K."/>
            <person name="Koop B.F."/>
            <person name="Matheson A.T."/>
        </authorList>
    </citation>
    <scope>NUCLEOTIDE SEQUENCE [GENOMIC DNA]</scope>
    <source>
        <strain>ATCC 33909 / DSM 639 / JCM 8929 / NBRC 15157 / NCIMB 11770</strain>
    </source>
</reference>
<reference key="2">
    <citation type="journal article" date="2005" name="J. Bacteriol.">
        <title>The genome of Sulfolobus acidocaldarius, a model organism of the Crenarchaeota.</title>
        <authorList>
            <person name="Chen L."/>
            <person name="Bruegger K."/>
            <person name="Skovgaard M."/>
            <person name="Redder P."/>
            <person name="She Q."/>
            <person name="Torarinsson E."/>
            <person name="Greve B."/>
            <person name="Awayez M."/>
            <person name="Zibat A."/>
            <person name="Klenk H.-P."/>
            <person name="Garrett R.A."/>
        </authorList>
    </citation>
    <scope>NUCLEOTIDE SEQUENCE [LARGE SCALE GENOMIC DNA]</scope>
    <source>
        <strain>ATCC 33909 / DSM 639 / JCM 8929 / NBRC 15157 / NCIMB 11770</strain>
    </source>
</reference>
<name>RS4E_SULAC</name>
<gene>
    <name type="primary">rps4e</name>
    <name type="ordered locus">Saci_0585</name>
</gene>
<protein>
    <recommendedName>
        <fullName evidence="1">Small ribosomal subunit protein eS4</fullName>
    </recommendedName>
    <alternativeName>
        <fullName>30S ribosomal protein S4e</fullName>
    </alternativeName>
</protein>
<organism>
    <name type="scientific">Sulfolobus acidocaldarius (strain ATCC 33909 / DSM 639 / JCM 8929 / NBRC 15157 / NCIMB 11770)</name>
    <dbReference type="NCBI Taxonomy" id="330779"/>
    <lineage>
        <taxon>Archaea</taxon>
        <taxon>Thermoproteota</taxon>
        <taxon>Thermoprotei</taxon>
        <taxon>Sulfolobales</taxon>
        <taxon>Sulfolobaceae</taxon>
        <taxon>Sulfolobus</taxon>
    </lineage>
</organism>
<comment type="similarity">
    <text evidence="1">Belongs to the eukaryotic ribosomal protein eS4 family.</text>
</comment>
<feature type="chain" id="PRO_0000130862" description="Small ribosomal subunit protein eS4">
    <location>
        <begin position="1"/>
        <end position="244"/>
    </location>
</feature>
<feature type="domain" description="S4 RNA-binding">
    <location>
        <begin position="37"/>
        <end position="123"/>
    </location>
</feature>
<accession>O05634</accession>
<accession>Q4JB52</accession>
<keyword id="KW-0002">3D-structure</keyword>
<keyword id="KW-1185">Reference proteome</keyword>
<keyword id="KW-0687">Ribonucleoprotein</keyword>
<keyword id="KW-0689">Ribosomal protein</keyword>
<keyword id="KW-0694">RNA-binding</keyword>
<keyword id="KW-0699">rRNA-binding</keyword>
<dbReference type="EMBL" id="Y07778">
    <property type="protein sequence ID" value="CAA69089.1"/>
    <property type="molecule type" value="Genomic_DNA"/>
</dbReference>
<dbReference type="EMBL" id="CP000077">
    <property type="protein sequence ID" value="AAY79977.1"/>
    <property type="molecule type" value="Genomic_DNA"/>
</dbReference>
<dbReference type="RefSeq" id="WP_011277479.1">
    <property type="nucleotide sequence ID" value="NC_007181.1"/>
</dbReference>
<dbReference type="PDB" id="8HKX">
    <property type="method" value="EM"/>
    <property type="resolution" value="3.14 A"/>
    <property type="chains" value="AS4E=2-241"/>
</dbReference>
<dbReference type="PDB" id="8HKY">
    <property type="method" value="EM"/>
    <property type="resolution" value="4.45 A"/>
    <property type="chains" value="AS4E=2-241"/>
</dbReference>
<dbReference type="PDB" id="8HKZ">
    <property type="method" value="EM"/>
    <property type="resolution" value="4.78 A"/>
    <property type="chains" value="AS4E=2-241"/>
</dbReference>
<dbReference type="PDB" id="8HL1">
    <property type="method" value="EM"/>
    <property type="resolution" value="3.93 A"/>
    <property type="chains" value="AS4E=2-241"/>
</dbReference>
<dbReference type="PDB" id="8HL2">
    <property type="method" value="EM"/>
    <property type="resolution" value="4.10 A"/>
    <property type="chains" value="AS4E=2-241"/>
</dbReference>
<dbReference type="PDB" id="8HL3">
    <property type="method" value="EM"/>
    <property type="resolution" value="4.80 A"/>
    <property type="chains" value="AS4E=2-241"/>
</dbReference>
<dbReference type="PDB" id="8HL4">
    <property type="method" value="EM"/>
    <property type="resolution" value="4.62 A"/>
    <property type="chains" value="AS4E=2-241"/>
</dbReference>
<dbReference type="PDB" id="8HL5">
    <property type="method" value="EM"/>
    <property type="resolution" value="5.72 A"/>
    <property type="chains" value="AS4E=2-241"/>
</dbReference>
<dbReference type="PDB" id="8WKP">
    <property type="method" value="EM"/>
    <property type="resolution" value="4.62 A"/>
    <property type="chains" value="AS4E=2-241"/>
</dbReference>
<dbReference type="PDB" id="8WQ2">
    <property type="method" value="EM"/>
    <property type="resolution" value="4.10 A"/>
    <property type="chains" value="AS4E=2-241"/>
</dbReference>
<dbReference type="PDB" id="8WQ4">
    <property type="method" value="EM"/>
    <property type="resolution" value="4.53 A"/>
    <property type="chains" value="AS4E=2-241"/>
</dbReference>
<dbReference type="PDBsum" id="8HKX"/>
<dbReference type="PDBsum" id="8HKY"/>
<dbReference type="PDBsum" id="8HKZ"/>
<dbReference type="PDBsum" id="8HL1"/>
<dbReference type="PDBsum" id="8HL2"/>
<dbReference type="PDBsum" id="8HL3"/>
<dbReference type="PDBsum" id="8HL4"/>
<dbReference type="PDBsum" id="8HL5"/>
<dbReference type="PDBsum" id="8WKP"/>
<dbReference type="PDBsum" id="8WQ2"/>
<dbReference type="PDBsum" id="8WQ4"/>
<dbReference type="EMDB" id="EMD-34862"/>
<dbReference type="EMDB" id="EMD-34863"/>
<dbReference type="EMDB" id="EMD-34864"/>
<dbReference type="EMDB" id="EMD-34866"/>
<dbReference type="EMDB" id="EMD-34867"/>
<dbReference type="EMDB" id="EMD-34868"/>
<dbReference type="EMDB" id="EMD-34869"/>
<dbReference type="EMDB" id="EMD-34870"/>
<dbReference type="EMDB" id="EMD-37604"/>
<dbReference type="EMDB" id="EMD-37733"/>
<dbReference type="EMDB" id="EMD-37734"/>
<dbReference type="SMR" id="O05634"/>
<dbReference type="STRING" id="330779.Saci_0585"/>
<dbReference type="GeneID" id="14551106"/>
<dbReference type="KEGG" id="sai:Saci_0585"/>
<dbReference type="PATRIC" id="fig|330779.12.peg.564"/>
<dbReference type="eggNOG" id="arCOG04093">
    <property type="taxonomic scope" value="Archaea"/>
</dbReference>
<dbReference type="HOGENOM" id="CLU_060400_0_0_2"/>
<dbReference type="Proteomes" id="UP000001018">
    <property type="component" value="Chromosome"/>
</dbReference>
<dbReference type="GO" id="GO:0022627">
    <property type="term" value="C:cytosolic small ribosomal subunit"/>
    <property type="evidence" value="ECO:0007669"/>
    <property type="project" value="TreeGrafter"/>
</dbReference>
<dbReference type="GO" id="GO:0019843">
    <property type="term" value="F:rRNA binding"/>
    <property type="evidence" value="ECO:0007669"/>
    <property type="project" value="UniProtKB-KW"/>
</dbReference>
<dbReference type="GO" id="GO:0003735">
    <property type="term" value="F:structural constituent of ribosome"/>
    <property type="evidence" value="ECO:0007669"/>
    <property type="project" value="InterPro"/>
</dbReference>
<dbReference type="GO" id="GO:0006412">
    <property type="term" value="P:translation"/>
    <property type="evidence" value="ECO:0007669"/>
    <property type="project" value="UniProtKB-UniRule"/>
</dbReference>
<dbReference type="CDD" id="cd06087">
    <property type="entry name" value="KOW_RPS4"/>
    <property type="match status" value="1"/>
</dbReference>
<dbReference type="CDD" id="cd00165">
    <property type="entry name" value="S4"/>
    <property type="match status" value="1"/>
</dbReference>
<dbReference type="FunFam" id="3.10.290.10:FF:000002">
    <property type="entry name" value="40S ribosomal protein S4"/>
    <property type="match status" value="1"/>
</dbReference>
<dbReference type="Gene3D" id="2.30.30.30">
    <property type="match status" value="1"/>
</dbReference>
<dbReference type="Gene3D" id="2.40.50.740">
    <property type="match status" value="1"/>
</dbReference>
<dbReference type="Gene3D" id="3.10.290.10">
    <property type="entry name" value="RNA-binding S4 domain"/>
    <property type="match status" value="1"/>
</dbReference>
<dbReference type="HAMAP" id="MF_00485">
    <property type="entry name" value="Ribosomal_eS4"/>
    <property type="match status" value="1"/>
</dbReference>
<dbReference type="InterPro" id="IPR005824">
    <property type="entry name" value="KOW"/>
</dbReference>
<dbReference type="InterPro" id="IPR014722">
    <property type="entry name" value="Rib_uL2_dom2"/>
</dbReference>
<dbReference type="InterPro" id="IPR000876">
    <property type="entry name" value="Ribosomal_eS4"/>
</dbReference>
<dbReference type="InterPro" id="IPR013845">
    <property type="entry name" value="Ribosomal_eS4_central_region"/>
</dbReference>
<dbReference type="InterPro" id="IPR038237">
    <property type="entry name" value="Ribosomal_eS4_central_sf"/>
</dbReference>
<dbReference type="InterPro" id="IPR041982">
    <property type="entry name" value="Ribosomal_eS4_KOW"/>
</dbReference>
<dbReference type="InterPro" id="IPR002942">
    <property type="entry name" value="S4_RNA-bd"/>
</dbReference>
<dbReference type="InterPro" id="IPR036986">
    <property type="entry name" value="S4_RNA-bd_sf"/>
</dbReference>
<dbReference type="NCBIfam" id="NF003312">
    <property type="entry name" value="PRK04313.1"/>
    <property type="match status" value="1"/>
</dbReference>
<dbReference type="PANTHER" id="PTHR11581">
    <property type="entry name" value="30S/40S RIBOSOMAL PROTEIN S4"/>
    <property type="match status" value="1"/>
</dbReference>
<dbReference type="PANTHER" id="PTHR11581:SF0">
    <property type="entry name" value="SMALL RIBOSOMAL SUBUNIT PROTEIN ES4"/>
    <property type="match status" value="1"/>
</dbReference>
<dbReference type="Pfam" id="PF00900">
    <property type="entry name" value="Ribosomal_S4e"/>
    <property type="match status" value="1"/>
</dbReference>
<dbReference type="Pfam" id="PF01479">
    <property type="entry name" value="S4"/>
    <property type="match status" value="1"/>
</dbReference>
<dbReference type="PIRSF" id="PIRSF002116">
    <property type="entry name" value="Ribosomal_S4"/>
    <property type="match status" value="1"/>
</dbReference>
<dbReference type="SMART" id="SM00739">
    <property type="entry name" value="KOW"/>
    <property type="match status" value="1"/>
</dbReference>
<dbReference type="SMART" id="SM00363">
    <property type="entry name" value="S4"/>
    <property type="match status" value="1"/>
</dbReference>
<dbReference type="SUPFAM" id="SSF55174">
    <property type="entry name" value="Alpha-L RNA-binding motif"/>
    <property type="match status" value="1"/>
</dbReference>
<dbReference type="PROSITE" id="PS50889">
    <property type="entry name" value="S4"/>
    <property type="match status" value="1"/>
</dbReference>
<proteinExistence type="evidence at protein level"/>
<evidence type="ECO:0000305" key="1"/>